<evidence type="ECO:0000250" key="1">
    <source>
        <dbReference type="UniProtKB" id="Q5H9F3"/>
    </source>
</evidence>
<evidence type="ECO:0000256" key="2">
    <source>
        <dbReference type="SAM" id="MobiDB-lite"/>
    </source>
</evidence>
<evidence type="ECO:0000269" key="3">
    <source>
    </source>
</evidence>
<evidence type="ECO:0000305" key="4"/>
<protein>
    <recommendedName>
        <fullName>BCL-6 corepressor-like protein 1</fullName>
        <shortName>BCoR-L1</shortName>
        <shortName>BCoR-like protein 1</shortName>
    </recommendedName>
</protein>
<sequence>MISTAPLYSGVHNWTSSDRIRMCGINEERRAPLSDEESTTGGCQHFGSQEFCVSSSFSKVELTAVGSGSNARGTNPDGNTTEKLGHRSEDQSDDPQPKMDYVGNPAEAEGLLVPLSSPGDGLKLPTPDSTEASHSRANCSWTPLSTQMSKQVDCSPAGVKALDSRHGVGEKNTFILATLGTGVPVEGTLPLVTTNFSQLPAPICPPAPGSASGTPSVPDPFQVPLSVPAPVPHSGLVPVQVATSASAPSPPLAPAAPSVPTLISDSNPLSVSASVLVPVPVSAPHSVPVPLSAPAPTPLTVSVSAPPLALIQAPVPPSAPTLVLASVPTPVLAPMPASTPPAAPAPPSVPMPTPTPSSGPPSTPTLIPAFAPTPVPAPTPAPIFTPAPTPMPAATPAAIPTSAPIPASFSLSRVCFPAAQAPAMQKVPLSFQPGTVLTPNQPLVYIPPPSCGQPLSVATLPTTLGVSSTLTLPVLPSYLQDRCLPGVLASPDLRSYPCAFSVARPLASDSKLVSLEVNRLSCTSPSSSTNSQPAPDGVPGPLADTSLTTASAKVLPTSQLLLPAPSGSSVPPHPSKMPGGTDQQTEGTSVTFSPLKSPPQLEREMASPPECSEMPLDLSAKSNRQKLPLPNQRKTPPMPVLTPVHTSSKALLSTVLSRSQRTTQAAGSNVTSCLGSTSSPFVIFPEMVRNGDPSTWVKNSTALISTIPGTYVGVANPVPASLLLNKDPNLGLNRDPRHLPKQEPISIIDQGEPKSTSATCGKKGSQAGAEGQPSTVKSRYTPARIAPGLPGCQTKELSLWKPTGLTNMYPRCSINGKPTSTQVLPVGWSPYHQASLLSIGISSAGQLTPSQGVPIRPTSIVSEFSGVSPLGSSETVHGLPEGQPRPGGPFAPEQDAVTKNKNCRIAAKPYEEQVNPVLLTLSPQSGTLALSVQPSSGDMGVNQGSEESESHLCSDSTPKMEGPQAACGLKLAGDTKPKNQVLATYMSHELVLANPQNLCKMPELPLLPHDSHSKELILDVVPSSERGPSTDLSQLGSQVDLGRVKMEKADGDVVFNLANCFRADGLPAVPQRGQAEARANAGQARVKRESIGVFTCKNSWQPDEETESLPPKKVKCNKEKEIEEEPRQQPPPQPHDKPMVRSSLGSKCRKLPGDPQEPTKKSPRGALDSGKEHNGVRGKHKHRKPTKPESQPPGKRTDGHEEGSLEKKAKNSFRDFIPVVLSTRTRSQSGSICSSFAGMADSDMGSQEVFPTEEEEEVAPTPAKRRKVRKTQRDTQYRSHHAQDKTLLSQGRRHLWRAREMPWRTEAARQMWDTNEEEEDDEEEGLVKRKKRRRQKSRKYQTGEYLIEQEEQRRKGRADSKARKQKTSSQSSEHCLRNRNLLLSSKAQGISDSPNGFLPDNLEEPACLENPEKPSGKRKCKTKHMANASEEARSKGRWSQQKTRSSKSPTPVKPTEPCTPSKYRSAGPEEASESPTARQIPPEARRLIVNKNAGETLLQRAARLGYKDVVLYCLQKHSEDVNHRDNAGYTALHEACSRGWTDILNILLQHGANVNCSSQDGTRPVHDAVVNDNLETIWLLLSYGADPTLATYSGQTAMKLASSDNMKRFLSDHLSDLQGRAEGDPRASWDFYSSSVLEKKDGFACDLLHNPPGSAEQGDDSEQDDFMFELSDKPLLPCYNLQVSVSRGPCNWFLFSDVLKRLKLSSRIFQARFPHLEITTLPKAEFYRQVASSQLLSPAERPGSLEDRSPPGSSETVELVQYEPELLRLLGSEVEYQSWSS</sequence>
<name>BCORL_MOUSE</name>
<accession>A2AQH4</accession>
<accession>Q8BMH7</accession>
<accession>Q8BV26</accession>
<accession>Q8BW58</accession>
<feature type="chain" id="PRO_0000312269" description="BCL-6 corepressor-like protein 1">
    <location>
        <begin position="1"/>
        <end position="1781"/>
    </location>
</feature>
<feature type="repeat" description="ANK 1">
    <location>
        <begin position="1493"/>
        <end position="1523"/>
    </location>
</feature>
<feature type="repeat" description="ANK 2">
    <location>
        <begin position="1527"/>
        <end position="1556"/>
    </location>
</feature>
<feature type="repeat" description="ANK 3">
    <location>
        <begin position="1560"/>
        <end position="1589"/>
    </location>
</feature>
<feature type="region of interest" description="Disordered" evidence="2">
    <location>
        <begin position="64"/>
        <end position="136"/>
    </location>
</feature>
<feature type="region of interest" description="Disordered" evidence="2">
    <location>
        <begin position="337"/>
        <end position="362"/>
    </location>
</feature>
<feature type="region of interest" description="Disordered" evidence="2">
    <location>
        <begin position="521"/>
        <end position="545"/>
    </location>
</feature>
<feature type="region of interest" description="Disordered" evidence="2">
    <location>
        <begin position="561"/>
        <end position="616"/>
    </location>
</feature>
<feature type="region of interest" description="Disordered" evidence="2">
    <location>
        <begin position="733"/>
        <end position="777"/>
    </location>
</feature>
<feature type="region of interest" description="Disordered" evidence="2">
    <location>
        <begin position="869"/>
        <end position="895"/>
    </location>
</feature>
<feature type="region of interest" description="Disordered" evidence="2">
    <location>
        <begin position="933"/>
        <end position="960"/>
    </location>
</feature>
<feature type="region of interest" description="Disordered" evidence="2">
    <location>
        <begin position="1100"/>
        <end position="1484"/>
    </location>
</feature>
<feature type="region of interest" description="PCGF Ub-like fold domain (PUFD); required for the interaction with the KDM2B-SKP1 heterodimeric complex" evidence="1">
    <location>
        <begin position="1664"/>
        <end position="1781"/>
    </location>
</feature>
<feature type="compositionally biased region" description="Polar residues" evidence="2">
    <location>
        <begin position="66"/>
        <end position="82"/>
    </location>
</feature>
<feature type="compositionally biased region" description="Polar residues" evidence="2">
    <location>
        <begin position="127"/>
        <end position="136"/>
    </location>
</feature>
<feature type="compositionally biased region" description="Low complexity" evidence="2">
    <location>
        <begin position="521"/>
        <end position="531"/>
    </location>
</feature>
<feature type="compositionally biased region" description="Polar residues" evidence="2">
    <location>
        <begin position="581"/>
        <end position="594"/>
    </location>
</feature>
<feature type="compositionally biased region" description="Basic and acidic residues" evidence="2">
    <location>
        <begin position="1116"/>
        <end position="1127"/>
    </location>
</feature>
<feature type="compositionally biased region" description="Basic residues" evidence="2">
    <location>
        <begin position="1176"/>
        <end position="1185"/>
    </location>
</feature>
<feature type="compositionally biased region" description="Basic and acidic residues" evidence="2">
    <location>
        <begin position="1195"/>
        <end position="1213"/>
    </location>
</feature>
<feature type="compositionally biased region" description="Polar residues" evidence="2">
    <location>
        <begin position="1222"/>
        <end position="1234"/>
    </location>
</feature>
<feature type="compositionally biased region" description="Basic and acidic residues" evidence="2">
    <location>
        <begin position="1271"/>
        <end position="1284"/>
    </location>
</feature>
<feature type="compositionally biased region" description="Basic and acidic residues" evidence="2">
    <location>
        <begin position="1297"/>
        <end position="1307"/>
    </location>
</feature>
<feature type="compositionally biased region" description="Acidic residues" evidence="2">
    <location>
        <begin position="1314"/>
        <end position="1324"/>
    </location>
</feature>
<feature type="compositionally biased region" description="Basic residues" evidence="2">
    <location>
        <begin position="1328"/>
        <end position="1339"/>
    </location>
</feature>
<feature type="compositionally biased region" description="Basic and acidic residues" evidence="2">
    <location>
        <begin position="1350"/>
        <end position="1362"/>
    </location>
</feature>
<feature type="compositionally biased region" description="Polar residues" evidence="2">
    <location>
        <begin position="1381"/>
        <end position="1394"/>
    </location>
</feature>
<feature type="compositionally biased region" description="Polar residues" evidence="2">
    <location>
        <begin position="1437"/>
        <end position="1449"/>
    </location>
</feature>
<feature type="modified residue" description="Phosphoserine" evidence="1">
    <location>
        <position position="490"/>
    </location>
</feature>
<feature type="modified residue" description="Phosphoserine" evidence="1">
    <location>
        <position position="593"/>
    </location>
</feature>
<feature type="modified residue" description="Phosphoserine" evidence="1">
    <location>
        <position position="607"/>
    </location>
</feature>
<feature type="modified residue" description="Phosphoserine" evidence="1">
    <location>
        <position position="1024"/>
    </location>
</feature>
<feature type="modified residue" description="Phosphoserine" evidence="1">
    <location>
        <position position="1162"/>
    </location>
</feature>
<feature type="cross-link" description="Glycyl lysine isopeptide (Lys-Gly) (interchain with G-Cter in SUMO2)" evidence="1">
    <location>
        <position position="741"/>
    </location>
</feature>
<feature type="cross-link" description="Glycyl lysine isopeptide (Lys-Gly) (interchain with G-Cter in SUMO2)" evidence="1">
    <location>
        <position position="1087"/>
    </location>
</feature>
<feature type="sequence conflict" description="In Ref. 2; BAC27262." evidence="4" ref="2">
    <original>A</original>
    <variation>V</variation>
    <location>
        <position position="1209"/>
    </location>
</feature>
<gene>
    <name type="primary">Bcorl1</name>
</gene>
<dbReference type="EMBL" id="AL844594">
    <property type="status" value="NOT_ANNOTATED_CDS"/>
    <property type="molecule type" value="Genomic_DNA"/>
</dbReference>
<dbReference type="EMBL" id="AK031119">
    <property type="protein sequence ID" value="BAC27262.1"/>
    <property type="status" value="ALT_SEQ"/>
    <property type="molecule type" value="mRNA"/>
</dbReference>
<dbReference type="EMBL" id="AK054259">
    <property type="protein sequence ID" value="BAC35708.1"/>
    <property type="status" value="ALT_INIT"/>
    <property type="molecule type" value="mRNA"/>
</dbReference>
<dbReference type="EMBL" id="AK081004">
    <property type="protein sequence ID" value="BAC38112.1"/>
    <property type="status" value="ALT_INIT"/>
    <property type="molecule type" value="mRNA"/>
</dbReference>
<dbReference type="CCDS" id="CCDS40961.1"/>
<dbReference type="RefSeq" id="NP_848897.3">
    <property type="nucleotide sequence ID" value="NM_178782.4"/>
</dbReference>
<dbReference type="RefSeq" id="XP_006541560.1">
    <property type="nucleotide sequence ID" value="XM_006541497.4"/>
</dbReference>
<dbReference type="RefSeq" id="XP_006541561.1">
    <property type="nucleotide sequence ID" value="XM_006541498.5"/>
</dbReference>
<dbReference type="RefSeq" id="XP_006541562.1">
    <property type="nucleotide sequence ID" value="XM_006541499.5"/>
</dbReference>
<dbReference type="RefSeq" id="XP_006541563.1">
    <property type="nucleotide sequence ID" value="XM_006541500.4"/>
</dbReference>
<dbReference type="RefSeq" id="XP_030107230.1">
    <property type="nucleotide sequence ID" value="XM_030251370.1"/>
</dbReference>
<dbReference type="RefSeq" id="XP_030107231.1">
    <property type="nucleotide sequence ID" value="XM_030251371.2"/>
</dbReference>
<dbReference type="RefSeq" id="XP_036017875.1">
    <property type="nucleotide sequence ID" value="XM_036161982.1"/>
</dbReference>
<dbReference type="SMR" id="A2AQH4"/>
<dbReference type="BioGRID" id="235973">
    <property type="interactions" value="1"/>
</dbReference>
<dbReference type="FunCoup" id="A2AQH4">
    <property type="interactions" value="1760"/>
</dbReference>
<dbReference type="STRING" id="10090.ENSMUSP00000122000"/>
<dbReference type="GlyGen" id="A2AQH4">
    <property type="glycosylation" value="11 sites, 1 O-linked glycan (3 sites)"/>
</dbReference>
<dbReference type="iPTMnet" id="A2AQH4"/>
<dbReference type="PhosphoSitePlus" id="A2AQH4"/>
<dbReference type="PaxDb" id="10090-ENSMUSP00000122000"/>
<dbReference type="PeptideAtlas" id="A2AQH4"/>
<dbReference type="ProteomicsDB" id="273599"/>
<dbReference type="Antibodypedia" id="30129">
    <property type="antibodies" value="77 antibodies from 15 providers"/>
</dbReference>
<dbReference type="DNASU" id="320376"/>
<dbReference type="Ensembl" id="ENSMUST00000037596.13">
    <property type="protein sequence ID" value="ENSMUSP00000039898.7"/>
    <property type="gene ID" value="ENSMUSG00000036959.16"/>
</dbReference>
<dbReference type="Ensembl" id="ENSMUST00000136348.8">
    <property type="protein sequence ID" value="ENSMUSP00000122000.2"/>
    <property type="gene ID" value="ENSMUSG00000036959.16"/>
</dbReference>
<dbReference type="GeneID" id="320376"/>
<dbReference type="KEGG" id="mmu:320376"/>
<dbReference type="UCSC" id="uc009tcc.1">
    <property type="organism name" value="mouse"/>
</dbReference>
<dbReference type="AGR" id="MGI:2443910"/>
<dbReference type="CTD" id="63035"/>
<dbReference type="MGI" id="MGI:2443910">
    <property type="gene designation" value="Bcorl1"/>
</dbReference>
<dbReference type="VEuPathDB" id="HostDB:ENSMUSG00000036959"/>
<dbReference type="eggNOG" id="ENOG502QSMY">
    <property type="taxonomic scope" value="Eukaryota"/>
</dbReference>
<dbReference type="GeneTree" id="ENSGT00940000153737"/>
<dbReference type="HOGENOM" id="CLU_003920_0_0_1"/>
<dbReference type="InParanoid" id="A2AQH4"/>
<dbReference type="OMA" id="EFQSWNS"/>
<dbReference type="OrthoDB" id="3666223at2759"/>
<dbReference type="PhylomeDB" id="A2AQH4"/>
<dbReference type="TreeFam" id="TF333317"/>
<dbReference type="BioGRID-ORCS" id="320376">
    <property type="hits" value="3 hits in 81 CRISPR screens"/>
</dbReference>
<dbReference type="PRO" id="PR:A2AQH4"/>
<dbReference type="Proteomes" id="UP000000589">
    <property type="component" value="Chromosome X"/>
</dbReference>
<dbReference type="RNAct" id="A2AQH4">
    <property type="molecule type" value="protein"/>
</dbReference>
<dbReference type="Bgee" id="ENSMUSG00000036959">
    <property type="expression patterns" value="Expressed in animal zygote and 113 other cell types or tissues"/>
</dbReference>
<dbReference type="ExpressionAtlas" id="A2AQH4">
    <property type="expression patterns" value="baseline and differential"/>
</dbReference>
<dbReference type="GO" id="GO:0005654">
    <property type="term" value="C:nucleoplasm"/>
    <property type="evidence" value="ECO:0007669"/>
    <property type="project" value="Ensembl"/>
</dbReference>
<dbReference type="GO" id="GO:0005886">
    <property type="term" value="C:plasma membrane"/>
    <property type="evidence" value="ECO:0007669"/>
    <property type="project" value="Ensembl"/>
</dbReference>
<dbReference type="GO" id="GO:0006325">
    <property type="term" value="P:chromatin organization"/>
    <property type="evidence" value="ECO:0007669"/>
    <property type="project" value="UniProtKB-KW"/>
</dbReference>
<dbReference type="CDD" id="cd14260">
    <property type="entry name" value="PUFD_like_1"/>
    <property type="match status" value="1"/>
</dbReference>
<dbReference type="FunFam" id="1.25.40.20:FF:000032">
    <property type="entry name" value="BCL-6 corepressor isoform X1"/>
    <property type="match status" value="1"/>
</dbReference>
<dbReference type="FunFam" id="3.10.260.40:FF:000001">
    <property type="entry name" value="BCL-6 corepressor isoform X2"/>
    <property type="match status" value="1"/>
</dbReference>
<dbReference type="Gene3D" id="1.25.40.20">
    <property type="entry name" value="Ankyrin repeat-containing domain"/>
    <property type="match status" value="1"/>
</dbReference>
<dbReference type="Gene3D" id="3.10.260.40">
    <property type="entry name" value="BCL-6 corepressor, PCGF1 binding domain"/>
    <property type="match status" value="1"/>
</dbReference>
<dbReference type="InterPro" id="IPR002110">
    <property type="entry name" value="Ankyrin_rpt"/>
</dbReference>
<dbReference type="InterPro" id="IPR036770">
    <property type="entry name" value="Ankyrin_rpt-contain_sf"/>
</dbReference>
<dbReference type="InterPro" id="IPR047144">
    <property type="entry name" value="BCOR-like"/>
</dbReference>
<dbReference type="InterPro" id="IPR032365">
    <property type="entry name" value="PUFD"/>
</dbReference>
<dbReference type="InterPro" id="IPR038227">
    <property type="entry name" value="PUFD_som_sf"/>
</dbReference>
<dbReference type="PANTHER" id="PTHR24117">
    <property type="entry name" value="AGAP007537-PB"/>
    <property type="match status" value="1"/>
</dbReference>
<dbReference type="PANTHER" id="PTHR24117:SF6">
    <property type="entry name" value="BCL-6 COREPRESSOR-LIKE PROTEIN 1"/>
    <property type="match status" value="1"/>
</dbReference>
<dbReference type="Pfam" id="PF12796">
    <property type="entry name" value="Ank_2"/>
    <property type="match status" value="1"/>
</dbReference>
<dbReference type="Pfam" id="PF16553">
    <property type="entry name" value="PUFD"/>
    <property type="match status" value="1"/>
</dbReference>
<dbReference type="SMART" id="SM00248">
    <property type="entry name" value="ANK"/>
    <property type="match status" value="3"/>
</dbReference>
<dbReference type="SUPFAM" id="SSF48403">
    <property type="entry name" value="Ankyrin repeat"/>
    <property type="match status" value="1"/>
</dbReference>
<dbReference type="PROSITE" id="PS50297">
    <property type="entry name" value="ANK_REP_REGION"/>
    <property type="match status" value="1"/>
</dbReference>
<dbReference type="PROSITE" id="PS50088">
    <property type="entry name" value="ANK_REPEAT"/>
    <property type="match status" value="2"/>
</dbReference>
<keyword id="KW-0040">ANK repeat</keyword>
<keyword id="KW-0156">Chromatin regulator</keyword>
<keyword id="KW-1017">Isopeptide bond</keyword>
<keyword id="KW-0539">Nucleus</keyword>
<keyword id="KW-0597">Phosphoprotein</keyword>
<keyword id="KW-1185">Reference proteome</keyword>
<keyword id="KW-0677">Repeat</keyword>
<keyword id="KW-0678">Repressor</keyword>
<keyword id="KW-0804">Transcription</keyword>
<keyword id="KW-0805">Transcription regulation</keyword>
<keyword id="KW-0832">Ubl conjugation</keyword>
<proteinExistence type="evidence at transcript level"/>
<organism>
    <name type="scientific">Mus musculus</name>
    <name type="common">Mouse</name>
    <dbReference type="NCBI Taxonomy" id="10090"/>
    <lineage>
        <taxon>Eukaryota</taxon>
        <taxon>Metazoa</taxon>
        <taxon>Chordata</taxon>
        <taxon>Craniata</taxon>
        <taxon>Vertebrata</taxon>
        <taxon>Euteleostomi</taxon>
        <taxon>Mammalia</taxon>
        <taxon>Eutheria</taxon>
        <taxon>Euarchontoglires</taxon>
        <taxon>Glires</taxon>
        <taxon>Rodentia</taxon>
        <taxon>Myomorpha</taxon>
        <taxon>Muroidea</taxon>
        <taxon>Muridae</taxon>
        <taxon>Murinae</taxon>
        <taxon>Mus</taxon>
        <taxon>Mus</taxon>
    </lineage>
</organism>
<comment type="function">
    <text evidence="1">Transcriptional corepressor. May specifically inhibit gene expression when recruited to promoter regions by sequence specific DNA-binding proteins such as BCL6. This repression may be mediated at least in part by histone deacetylase activities which can associate with this corepressor (By similarity).</text>
</comment>
<comment type="subunit">
    <text evidence="1">Interacts with PCGF1, forming heterodimers (By similarity). The PCGF1-BCORL1 heterodimeric complex interacts with the KDM2B-SKP1 heterodimeric complex to form a homotetrameric polycomb repression complex 1 (PRC1.1) (By similarity). Interacts with SKP1 (By similarity). Interacts with CTBP1, HDAC4, HDAC5 and HDAC7 (By similarity).</text>
</comment>
<comment type="subcellular location">
    <subcellularLocation>
        <location evidence="1">Nucleus</location>
    </subcellularLocation>
</comment>
<comment type="tissue specificity">
    <text evidence="3">Highly expressed in lung and testis.</text>
</comment>
<comment type="disruption phenotype">
    <text evidence="3">BCORL1 knockdown results in impaired spermatogenesis, drastically reduced sperm count and motility, and male infertility. Mutant mice have small testes.</text>
</comment>
<comment type="similarity">
    <text evidence="4">Belongs to the BCOR family.</text>
</comment>
<comment type="sequence caution" evidence="4">
    <conflict type="erroneous termination">
        <sequence resource="EMBL-CDS" id="BAC27262"/>
    </conflict>
    <text>Truncated C-terminus.</text>
</comment>
<comment type="sequence caution" evidence="4">
    <conflict type="frameshift">
        <sequence resource="EMBL-CDS" id="BAC27262"/>
    </conflict>
</comment>
<comment type="sequence caution" evidence="4">
    <conflict type="erroneous initiation">
        <sequence resource="EMBL-CDS" id="BAC35708"/>
    </conflict>
    <text>Truncated N-terminus.</text>
</comment>
<comment type="sequence caution" evidence="4">
    <conflict type="erroneous initiation">
        <sequence resource="EMBL-CDS" id="BAC38112"/>
    </conflict>
    <text>Truncated N-terminus.</text>
</comment>
<reference key="1">
    <citation type="journal article" date="2009" name="PLoS Biol.">
        <title>Lineage-specific biology revealed by a finished genome assembly of the mouse.</title>
        <authorList>
            <person name="Church D.M."/>
            <person name="Goodstadt L."/>
            <person name="Hillier L.W."/>
            <person name="Zody M.C."/>
            <person name="Goldstein S."/>
            <person name="She X."/>
            <person name="Bult C.J."/>
            <person name="Agarwala R."/>
            <person name="Cherry J.L."/>
            <person name="DiCuccio M."/>
            <person name="Hlavina W."/>
            <person name="Kapustin Y."/>
            <person name="Meric P."/>
            <person name="Maglott D."/>
            <person name="Birtle Z."/>
            <person name="Marques A.C."/>
            <person name="Graves T."/>
            <person name="Zhou S."/>
            <person name="Teague B."/>
            <person name="Potamousis K."/>
            <person name="Churas C."/>
            <person name="Place M."/>
            <person name="Herschleb J."/>
            <person name="Runnheim R."/>
            <person name="Forrest D."/>
            <person name="Amos-Landgraf J."/>
            <person name="Schwartz D.C."/>
            <person name="Cheng Z."/>
            <person name="Lindblad-Toh K."/>
            <person name="Eichler E.E."/>
            <person name="Ponting C.P."/>
        </authorList>
    </citation>
    <scope>NUCLEOTIDE SEQUENCE [LARGE SCALE GENOMIC DNA]</scope>
    <source>
        <strain>C57BL/6J</strain>
    </source>
</reference>
<reference key="2">
    <citation type="journal article" date="2005" name="Science">
        <title>The transcriptional landscape of the mammalian genome.</title>
        <authorList>
            <person name="Carninci P."/>
            <person name="Kasukawa T."/>
            <person name="Katayama S."/>
            <person name="Gough J."/>
            <person name="Frith M.C."/>
            <person name="Maeda N."/>
            <person name="Oyama R."/>
            <person name="Ravasi T."/>
            <person name="Lenhard B."/>
            <person name="Wells C."/>
            <person name="Kodzius R."/>
            <person name="Shimokawa K."/>
            <person name="Bajic V.B."/>
            <person name="Brenner S.E."/>
            <person name="Batalov S."/>
            <person name="Forrest A.R."/>
            <person name="Zavolan M."/>
            <person name="Davis M.J."/>
            <person name="Wilming L.G."/>
            <person name="Aidinis V."/>
            <person name="Allen J.E."/>
            <person name="Ambesi-Impiombato A."/>
            <person name="Apweiler R."/>
            <person name="Aturaliya R.N."/>
            <person name="Bailey T.L."/>
            <person name="Bansal M."/>
            <person name="Baxter L."/>
            <person name="Beisel K.W."/>
            <person name="Bersano T."/>
            <person name="Bono H."/>
            <person name="Chalk A.M."/>
            <person name="Chiu K.P."/>
            <person name="Choudhary V."/>
            <person name="Christoffels A."/>
            <person name="Clutterbuck D.R."/>
            <person name="Crowe M.L."/>
            <person name="Dalla E."/>
            <person name="Dalrymple B.P."/>
            <person name="de Bono B."/>
            <person name="Della Gatta G."/>
            <person name="di Bernardo D."/>
            <person name="Down T."/>
            <person name="Engstrom P."/>
            <person name="Fagiolini M."/>
            <person name="Faulkner G."/>
            <person name="Fletcher C.F."/>
            <person name="Fukushima T."/>
            <person name="Furuno M."/>
            <person name="Futaki S."/>
            <person name="Gariboldi M."/>
            <person name="Georgii-Hemming P."/>
            <person name="Gingeras T.R."/>
            <person name="Gojobori T."/>
            <person name="Green R.E."/>
            <person name="Gustincich S."/>
            <person name="Harbers M."/>
            <person name="Hayashi Y."/>
            <person name="Hensch T.K."/>
            <person name="Hirokawa N."/>
            <person name="Hill D."/>
            <person name="Huminiecki L."/>
            <person name="Iacono M."/>
            <person name="Ikeo K."/>
            <person name="Iwama A."/>
            <person name="Ishikawa T."/>
            <person name="Jakt M."/>
            <person name="Kanapin A."/>
            <person name="Katoh M."/>
            <person name="Kawasawa Y."/>
            <person name="Kelso J."/>
            <person name="Kitamura H."/>
            <person name="Kitano H."/>
            <person name="Kollias G."/>
            <person name="Krishnan S.P."/>
            <person name="Kruger A."/>
            <person name="Kummerfeld S.K."/>
            <person name="Kurochkin I.V."/>
            <person name="Lareau L.F."/>
            <person name="Lazarevic D."/>
            <person name="Lipovich L."/>
            <person name="Liu J."/>
            <person name="Liuni S."/>
            <person name="McWilliam S."/>
            <person name="Madan Babu M."/>
            <person name="Madera M."/>
            <person name="Marchionni L."/>
            <person name="Matsuda H."/>
            <person name="Matsuzawa S."/>
            <person name="Miki H."/>
            <person name="Mignone F."/>
            <person name="Miyake S."/>
            <person name="Morris K."/>
            <person name="Mottagui-Tabar S."/>
            <person name="Mulder N."/>
            <person name="Nakano N."/>
            <person name="Nakauchi H."/>
            <person name="Ng P."/>
            <person name="Nilsson R."/>
            <person name="Nishiguchi S."/>
            <person name="Nishikawa S."/>
            <person name="Nori F."/>
            <person name="Ohara O."/>
            <person name="Okazaki Y."/>
            <person name="Orlando V."/>
            <person name="Pang K.C."/>
            <person name="Pavan W.J."/>
            <person name="Pavesi G."/>
            <person name="Pesole G."/>
            <person name="Petrovsky N."/>
            <person name="Piazza S."/>
            <person name="Reed J."/>
            <person name="Reid J.F."/>
            <person name="Ring B.Z."/>
            <person name="Ringwald M."/>
            <person name="Rost B."/>
            <person name="Ruan Y."/>
            <person name="Salzberg S.L."/>
            <person name="Sandelin A."/>
            <person name="Schneider C."/>
            <person name="Schoenbach C."/>
            <person name="Sekiguchi K."/>
            <person name="Semple C.A."/>
            <person name="Seno S."/>
            <person name="Sessa L."/>
            <person name="Sheng Y."/>
            <person name="Shibata Y."/>
            <person name="Shimada H."/>
            <person name="Shimada K."/>
            <person name="Silva D."/>
            <person name="Sinclair B."/>
            <person name="Sperling S."/>
            <person name="Stupka E."/>
            <person name="Sugiura K."/>
            <person name="Sultana R."/>
            <person name="Takenaka Y."/>
            <person name="Taki K."/>
            <person name="Tammoja K."/>
            <person name="Tan S.L."/>
            <person name="Tang S."/>
            <person name="Taylor M.S."/>
            <person name="Tegner J."/>
            <person name="Teichmann S.A."/>
            <person name="Ueda H.R."/>
            <person name="van Nimwegen E."/>
            <person name="Verardo R."/>
            <person name="Wei C.L."/>
            <person name="Yagi K."/>
            <person name="Yamanishi H."/>
            <person name="Zabarovsky E."/>
            <person name="Zhu S."/>
            <person name="Zimmer A."/>
            <person name="Hide W."/>
            <person name="Bult C."/>
            <person name="Grimmond S.M."/>
            <person name="Teasdale R.D."/>
            <person name="Liu E.T."/>
            <person name="Brusic V."/>
            <person name="Quackenbush J."/>
            <person name="Wahlestedt C."/>
            <person name="Mattick J.S."/>
            <person name="Hume D.A."/>
            <person name="Kai C."/>
            <person name="Sasaki D."/>
            <person name="Tomaru Y."/>
            <person name="Fukuda S."/>
            <person name="Kanamori-Katayama M."/>
            <person name="Suzuki M."/>
            <person name="Aoki J."/>
            <person name="Arakawa T."/>
            <person name="Iida J."/>
            <person name="Imamura K."/>
            <person name="Itoh M."/>
            <person name="Kato T."/>
            <person name="Kawaji H."/>
            <person name="Kawagashira N."/>
            <person name="Kawashima T."/>
            <person name="Kojima M."/>
            <person name="Kondo S."/>
            <person name="Konno H."/>
            <person name="Nakano K."/>
            <person name="Ninomiya N."/>
            <person name="Nishio T."/>
            <person name="Okada M."/>
            <person name="Plessy C."/>
            <person name="Shibata K."/>
            <person name="Shiraki T."/>
            <person name="Suzuki S."/>
            <person name="Tagami M."/>
            <person name="Waki K."/>
            <person name="Watahiki A."/>
            <person name="Okamura-Oho Y."/>
            <person name="Suzuki H."/>
            <person name="Kawai J."/>
            <person name="Hayashizaki Y."/>
        </authorList>
    </citation>
    <scope>NUCLEOTIDE SEQUENCE [LARGE SCALE MRNA] OF 395-1781</scope>
    <source>
        <strain>C57BL/6J</strain>
        <tissue>Cerebellum</tissue>
        <tissue>Fetal forelimb</tissue>
        <tissue>Ovary</tissue>
    </source>
</reference>
<reference key="3">
    <citation type="journal article" date="2021" name="J. Med. Genet.">
        <title>Human X chromosome exome sequencing identifies BCORL1 as contributor to spermatogenesis.</title>
        <authorList>
            <person name="Lu C."/>
            <person name="Zhang Y."/>
            <person name="Qin Y."/>
            <person name="Xu Q."/>
            <person name="Zhou R."/>
            <person name="Cui Y."/>
            <person name="Zhu Y."/>
            <person name="Zhang X."/>
            <person name="Zhang J."/>
            <person name="Wei X."/>
            <person name="Wang M."/>
            <person name="Hang B."/>
            <person name="Mao J.H."/>
            <person name="Snijders A.M."/>
            <person name="Liu M."/>
            <person name="Hu Z."/>
            <person name="Shen H."/>
            <person name="Zhou Z."/>
            <person name="Guo X."/>
            <person name="Wu X."/>
            <person name="Wang X."/>
            <person name="Xia Y."/>
        </authorList>
    </citation>
    <scope>TISSUE SPECIFICITY</scope>
    <scope>DISRUPTION PHENOTYPE</scope>
</reference>